<feature type="chain" id="PRO_1000054680" description="Large ribosomal subunit protein uL16">
    <location>
        <begin position="1"/>
        <end position="137"/>
    </location>
</feature>
<evidence type="ECO:0000255" key="1">
    <source>
        <dbReference type="HAMAP-Rule" id="MF_01342"/>
    </source>
</evidence>
<evidence type="ECO:0000305" key="2"/>
<gene>
    <name evidence="1" type="primary">rplP</name>
    <name type="ordered locus">PSPA7_0844</name>
</gene>
<protein>
    <recommendedName>
        <fullName evidence="1">Large ribosomal subunit protein uL16</fullName>
    </recommendedName>
    <alternativeName>
        <fullName evidence="2">50S ribosomal protein L16</fullName>
    </alternativeName>
</protein>
<organism>
    <name type="scientific">Pseudomonas paraeruginosa (strain DSM 24068 / PA7)</name>
    <name type="common">Pseudomonas aeruginosa (strain PA7)</name>
    <dbReference type="NCBI Taxonomy" id="381754"/>
    <lineage>
        <taxon>Bacteria</taxon>
        <taxon>Pseudomonadati</taxon>
        <taxon>Pseudomonadota</taxon>
        <taxon>Gammaproteobacteria</taxon>
        <taxon>Pseudomonadales</taxon>
        <taxon>Pseudomonadaceae</taxon>
        <taxon>Pseudomonas</taxon>
        <taxon>Pseudomonas paraeruginosa</taxon>
    </lineage>
</organism>
<reference key="1">
    <citation type="submission" date="2007-06" db="EMBL/GenBank/DDBJ databases">
        <authorList>
            <person name="Dodson R.J."/>
            <person name="Harkins D."/>
            <person name="Paulsen I.T."/>
        </authorList>
    </citation>
    <scope>NUCLEOTIDE SEQUENCE [LARGE SCALE GENOMIC DNA]</scope>
    <source>
        <strain>DSM 24068 / PA7</strain>
    </source>
</reference>
<keyword id="KW-0687">Ribonucleoprotein</keyword>
<keyword id="KW-0689">Ribosomal protein</keyword>
<keyword id="KW-0694">RNA-binding</keyword>
<keyword id="KW-0699">rRNA-binding</keyword>
<keyword id="KW-0820">tRNA-binding</keyword>
<name>RL16_PSEP7</name>
<comment type="function">
    <text evidence="1">Binds 23S rRNA and is also seen to make contacts with the A and possibly P site tRNAs.</text>
</comment>
<comment type="subunit">
    <text evidence="1">Part of the 50S ribosomal subunit.</text>
</comment>
<comment type="similarity">
    <text evidence="1">Belongs to the universal ribosomal protein uL16 family.</text>
</comment>
<sequence>MLQPKRTKFRKQMTGHNRGLAHRGSKVSFGEYALKATGRGRLTARQIESARRALTRHVKRGGKIWIRVFPDKPVTKKPLEVRMGKGKGGVEYWVAQIQPGKVLYEIEGVSEELAREAFALAAAKLPLATSFVKRTVM</sequence>
<accession>A6UZJ5</accession>
<dbReference type="EMBL" id="CP000744">
    <property type="protein sequence ID" value="ABR83831.1"/>
    <property type="molecule type" value="Genomic_DNA"/>
</dbReference>
<dbReference type="RefSeq" id="WP_003152269.1">
    <property type="nucleotide sequence ID" value="NC_009656.1"/>
</dbReference>
<dbReference type="SMR" id="A6UZJ5"/>
<dbReference type="GeneID" id="77219205"/>
<dbReference type="KEGG" id="pap:PSPA7_0844"/>
<dbReference type="HOGENOM" id="CLU_078858_2_1_6"/>
<dbReference type="Proteomes" id="UP000001582">
    <property type="component" value="Chromosome"/>
</dbReference>
<dbReference type="GO" id="GO:0022625">
    <property type="term" value="C:cytosolic large ribosomal subunit"/>
    <property type="evidence" value="ECO:0007669"/>
    <property type="project" value="TreeGrafter"/>
</dbReference>
<dbReference type="GO" id="GO:0019843">
    <property type="term" value="F:rRNA binding"/>
    <property type="evidence" value="ECO:0007669"/>
    <property type="project" value="UniProtKB-UniRule"/>
</dbReference>
<dbReference type="GO" id="GO:0003735">
    <property type="term" value="F:structural constituent of ribosome"/>
    <property type="evidence" value="ECO:0007669"/>
    <property type="project" value="InterPro"/>
</dbReference>
<dbReference type="GO" id="GO:0000049">
    <property type="term" value="F:tRNA binding"/>
    <property type="evidence" value="ECO:0007669"/>
    <property type="project" value="UniProtKB-KW"/>
</dbReference>
<dbReference type="GO" id="GO:0006412">
    <property type="term" value="P:translation"/>
    <property type="evidence" value="ECO:0007669"/>
    <property type="project" value="UniProtKB-UniRule"/>
</dbReference>
<dbReference type="CDD" id="cd01433">
    <property type="entry name" value="Ribosomal_L16_L10e"/>
    <property type="match status" value="1"/>
</dbReference>
<dbReference type="FunFam" id="3.90.1170.10:FF:000001">
    <property type="entry name" value="50S ribosomal protein L16"/>
    <property type="match status" value="1"/>
</dbReference>
<dbReference type="Gene3D" id="3.90.1170.10">
    <property type="entry name" value="Ribosomal protein L10e/L16"/>
    <property type="match status" value="1"/>
</dbReference>
<dbReference type="HAMAP" id="MF_01342">
    <property type="entry name" value="Ribosomal_uL16"/>
    <property type="match status" value="1"/>
</dbReference>
<dbReference type="InterPro" id="IPR047873">
    <property type="entry name" value="Ribosomal_uL16"/>
</dbReference>
<dbReference type="InterPro" id="IPR000114">
    <property type="entry name" value="Ribosomal_uL16_bact-type"/>
</dbReference>
<dbReference type="InterPro" id="IPR020798">
    <property type="entry name" value="Ribosomal_uL16_CS"/>
</dbReference>
<dbReference type="InterPro" id="IPR016180">
    <property type="entry name" value="Ribosomal_uL16_dom"/>
</dbReference>
<dbReference type="InterPro" id="IPR036920">
    <property type="entry name" value="Ribosomal_uL16_sf"/>
</dbReference>
<dbReference type="NCBIfam" id="TIGR01164">
    <property type="entry name" value="rplP_bact"/>
    <property type="match status" value="1"/>
</dbReference>
<dbReference type="PANTHER" id="PTHR12220">
    <property type="entry name" value="50S/60S RIBOSOMAL PROTEIN L16"/>
    <property type="match status" value="1"/>
</dbReference>
<dbReference type="PANTHER" id="PTHR12220:SF13">
    <property type="entry name" value="LARGE RIBOSOMAL SUBUNIT PROTEIN UL16M"/>
    <property type="match status" value="1"/>
</dbReference>
<dbReference type="Pfam" id="PF00252">
    <property type="entry name" value="Ribosomal_L16"/>
    <property type="match status" value="1"/>
</dbReference>
<dbReference type="PRINTS" id="PR00060">
    <property type="entry name" value="RIBOSOMALL16"/>
</dbReference>
<dbReference type="SUPFAM" id="SSF54686">
    <property type="entry name" value="Ribosomal protein L16p/L10e"/>
    <property type="match status" value="1"/>
</dbReference>
<dbReference type="PROSITE" id="PS00586">
    <property type="entry name" value="RIBOSOMAL_L16_1"/>
    <property type="match status" value="1"/>
</dbReference>
<dbReference type="PROSITE" id="PS00701">
    <property type="entry name" value="RIBOSOMAL_L16_2"/>
    <property type="match status" value="1"/>
</dbReference>
<proteinExistence type="inferred from homology"/>